<keyword id="KW-0204">Cytolysis</keyword>
<keyword id="KW-0903">Direct protein sequencing</keyword>
<keyword id="KW-0406">Ion transport</keyword>
<keyword id="KW-0472">Membrane</keyword>
<keyword id="KW-0166">Nematocyst</keyword>
<keyword id="KW-0964">Secreted</keyword>
<keyword id="KW-1052">Target cell membrane</keyword>
<keyword id="KW-1053">Target membrane</keyword>
<keyword id="KW-0800">Toxin</keyword>
<keyword id="KW-0812">Transmembrane</keyword>
<keyword id="KW-0813">Transport</keyword>
<comment type="function">
    <text evidence="1">Pore-forming protein that forms cations-selective hydrophilic pores of around 1 nm and causes cardiac stimulation and cytolysis. Pore formation is a multi-step process that involves specific recognition of membrane sphingomyelin (but neither cholesterol nor phosphatidylcholine) using aromatic rich region and adjacent phosphocholine (POC) binding site, firm binding to the membrane (mainly driven by hydrophobic interactions) accompanied by the transfer of the N-terminal region to the lipid-water interface and finally pore formation after oligomerization of monomers. Cytolytic effects include red blood cells hemolysis, platelet aggregation and lysis, cytotoxic and cytostatic effects on fibroblasts. Lethality in mammals has been ascribed to severe vasospasm of coronary vessels, cardiac arrhythmia, and inotropic effects (By similarity).</text>
</comment>
<comment type="subunit">
    <text evidence="2">Octamer or nonamer in membranes. Monomer in the soluble state.</text>
</comment>
<comment type="subcellular location">
    <subcellularLocation>
        <location evidence="2">Secreted</location>
    </subcellularLocation>
    <subcellularLocation>
        <location evidence="3">Nematocyst</location>
    </subcellularLocation>
    <subcellularLocation>
        <location evidence="2">Target cell membrane</location>
    </subcellularLocation>
    <text evidence="2">Forms an alpha-helical membrane channel in the prey.</text>
</comment>
<comment type="domain">
    <text evidence="4">Composed of a long N-terminal alpha-helix and a core region rich in beta-sheet structures. Before the pore formation, the alpha-helix binds the lipid membrane, partitions into the lipid-water interface and stabilizes the monomeric molecule on the membrane. Finally, it traverses the bilayer, thus forming the transmembrane pore.</text>
</comment>
<comment type="similarity">
    <text evidence="8">Belongs to the actinoporin family. Sea anemone subfamily.</text>
</comment>
<dbReference type="EMBL" id="AY861662">
    <property type="protein sequence ID" value="AAW47579.1"/>
    <property type="molecule type" value="mRNA"/>
</dbReference>
<dbReference type="SMR" id="Q5I2B1"/>
<dbReference type="GO" id="GO:0005576">
    <property type="term" value="C:extracellular region"/>
    <property type="evidence" value="ECO:0007669"/>
    <property type="project" value="UniProtKB-SubCell"/>
</dbReference>
<dbReference type="GO" id="GO:0042151">
    <property type="term" value="C:nematocyst"/>
    <property type="evidence" value="ECO:0007669"/>
    <property type="project" value="UniProtKB-SubCell"/>
</dbReference>
<dbReference type="GO" id="GO:0044218">
    <property type="term" value="C:other organism cell membrane"/>
    <property type="evidence" value="ECO:0007669"/>
    <property type="project" value="UniProtKB-KW"/>
</dbReference>
<dbReference type="GO" id="GO:0046930">
    <property type="term" value="C:pore complex"/>
    <property type="evidence" value="ECO:0007669"/>
    <property type="project" value="InterPro"/>
</dbReference>
<dbReference type="GO" id="GO:0015267">
    <property type="term" value="F:channel activity"/>
    <property type="evidence" value="ECO:0007669"/>
    <property type="project" value="InterPro"/>
</dbReference>
<dbReference type="GO" id="GO:0090729">
    <property type="term" value="F:toxin activity"/>
    <property type="evidence" value="ECO:0007669"/>
    <property type="project" value="UniProtKB-KW"/>
</dbReference>
<dbReference type="GO" id="GO:0051715">
    <property type="term" value="P:cytolysis in another organism"/>
    <property type="evidence" value="ECO:0007669"/>
    <property type="project" value="InterPro"/>
</dbReference>
<dbReference type="GO" id="GO:0006812">
    <property type="term" value="P:monoatomic cation transport"/>
    <property type="evidence" value="ECO:0007669"/>
    <property type="project" value="InterPro"/>
</dbReference>
<dbReference type="GO" id="GO:0046931">
    <property type="term" value="P:pore complex assembly"/>
    <property type="evidence" value="ECO:0007669"/>
    <property type="project" value="InterPro"/>
</dbReference>
<dbReference type="FunFam" id="2.60.270.20:FF:000001">
    <property type="entry name" value="DELTA-actitoxin-Afr1a"/>
    <property type="match status" value="1"/>
</dbReference>
<dbReference type="Gene3D" id="2.60.270.20">
    <property type="entry name" value="Cytolysin/lectin"/>
    <property type="match status" value="1"/>
</dbReference>
<dbReference type="InterPro" id="IPR050677">
    <property type="entry name" value="Actinoporin_PFT"/>
</dbReference>
<dbReference type="InterPro" id="IPR009104">
    <property type="entry name" value="Anemon_actinoporin-like"/>
</dbReference>
<dbReference type="InterPro" id="IPR015926">
    <property type="entry name" value="Cytolysin/lectin"/>
</dbReference>
<dbReference type="PANTHER" id="PTHR40388">
    <property type="entry name" value="BRYOPORIN"/>
    <property type="match status" value="1"/>
</dbReference>
<dbReference type="PANTHER" id="PTHR40388:SF1">
    <property type="entry name" value="BRYOPORIN"/>
    <property type="match status" value="1"/>
</dbReference>
<dbReference type="Pfam" id="PF06369">
    <property type="entry name" value="Anemone_cytotox"/>
    <property type="match status" value="1"/>
</dbReference>
<dbReference type="SUPFAM" id="SSF63724">
    <property type="entry name" value="Cytolysin/lectin"/>
    <property type="match status" value="1"/>
</dbReference>
<evidence type="ECO:0000250" key="1"/>
<evidence type="ECO:0000250" key="2">
    <source>
        <dbReference type="UniProtKB" id="B9W5G6"/>
    </source>
</evidence>
<evidence type="ECO:0000250" key="3">
    <source>
        <dbReference type="UniProtKB" id="P07845"/>
    </source>
</evidence>
<evidence type="ECO:0000250" key="4">
    <source>
        <dbReference type="UniProtKB" id="P61914"/>
    </source>
</evidence>
<evidence type="ECO:0000303" key="5">
    <source>
    </source>
</evidence>
<evidence type="ECO:0000303" key="6">
    <source>
    </source>
</evidence>
<evidence type="ECO:0000303" key="7">
    <source>
    </source>
</evidence>
<evidence type="ECO:0000305" key="8"/>
<sequence length="173" mass="18733">GAIIAGAALGFNVHQTVLKALGQVSRKIAIGVDNESGGTWTALNAYFRSGTTDVILPEFVPNQKALLYSGQKDTGPVATGAVGVLAYYMSDGNTLGVMFSVPFDYNLYSNWWDVKVYRGRRRADQAMYEGLLYGIPYGGDNGWHARKLGYGLKGRGFMKSSAQSILEIHVTKA</sequence>
<organism>
    <name type="scientific">Oulactis orientalis</name>
    <name type="common">Japan anemone</name>
    <name type="synonym">Anthopleura orientalis</name>
    <dbReference type="NCBI Taxonomy" id="308032"/>
    <lineage>
        <taxon>Eukaryota</taxon>
        <taxon>Metazoa</taxon>
        <taxon>Cnidaria</taxon>
        <taxon>Anthozoa</taxon>
        <taxon>Hexacorallia</taxon>
        <taxon>Actiniaria</taxon>
        <taxon>Actiniidae</taxon>
        <taxon>Oulactis</taxon>
    </lineage>
</organism>
<proteinExistence type="evidence at protein level"/>
<protein>
    <recommendedName>
        <fullName evidence="7">DELTA-actitoxin-Oor1b</fullName>
        <shortName evidence="7">DELTA-AITX-Oor1b</shortName>
    </recommendedName>
    <alternativeName>
        <fullName evidence="5 6">Actinoporin Or-G</fullName>
    </alternativeName>
    <alternativeName>
        <fullName evidence="5">Cytolysin Or-G</fullName>
    </alternativeName>
</protein>
<name>ACTPG_OULOR</name>
<reference key="1">
    <citation type="journal article" date="2005" name="Bioorg. Khim.">
        <title>Primary structures of actinoporins from sea anemone Oulactis orientalis.</title>
        <authorList>
            <person name="Il'ina A.P."/>
            <person name="Monastyrnaia M.M."/>
            <person name="Isaeva M.P."/>
            <person name="Guzev K.V."/>
            <person name="Rasskazov V.A."/>
            <person name="Kozlovskaya E.P."/>
        </authorList>
    </citation>
    <scope>NUCLEOTIDE SEQUENCE [MRNA]</scope>
</reference>
<reference key="2">
    <citation type="journal article" date="2005" name="Bioorg. Khim.">
        <title>Actinoporins from the Sea of Japan anemone Oulactis orientalis: isolation and partial characterization.</title>
        <authorList>
            <person name="Il'ina A.P."/>
            <person name="Monastyrnaia M.M."/>
            <person name="Sokotun I.N."/>
            <person name="Egorov T.A."/>
            <person name="Nazarenko I.A."/>
            <person name="Likhatskaia G.N."/>
            <person name="Kozlovskaya E.P."/>
        </authorList>
    </citation>
    <scope>PROTEIN SEQUENCE OF 1-8</scope>
</reference>
<reference key="3">
    <citation type="journal article" date="2009" name="Toxicon">
        <title>Molecular mechanism of pore formation by actinoporins.</title>
        <authorList>
            <person name="Kristan K.C."/>
            <person name="Viero G."/>
            <person name="Dalla Serra M."/>
            <person name="Macek P."/>
            <person name="Anderluh G."/>
        </authorList>
    </citation>
    <scope>REVIEW</scope>
</reference>
<reference key="4">
    <citation type="journal article" date="2012" name="Toxicon">
        <title>Development of a rational nomenclature for naming peptide and protein toxins from sea anemones.</title>
        <authorList>
            <person name="Oliveira J.S."/>
            <person name="Fuentes-Silva D."/>
            <person name="King G.F."/>
        </authorList>
    </citation>
    <scope>NOMENCLATURE</scope>
</reference>
<feature type="chain" id="PRO_0000239262" description="DELTA-actitoxin-Oor1b">
    <location>
        <begin position="1"/>
        <end position="173"/>
    </location>
</feature>
<feature type="region of interest" description="N-terminal region" evidence="4">
    <location>
        <begin position="6"/>
        <end position="25"/>
    </location>
</feature>
<feature type="region of interest" description="Trp-rich region, which is important for the binding to lipid membrane" evidence="4">
    <location>
        <begin position="100"/>
        <end position="115"/>
    </location>
</feature>
<feature type="binding site" evidence="3">
    <location>
        <position position="49"/>
    </location>
    <ligand>
        <name>phosphocholine</name>
        <dbReference type="ChEBI" id="CHEBI:295975"/>
    </ligand>
</feature>
<feature type="binding site" evidence="3">
    <location>
        <position position="82"/>
    </location>
    <ligand>
        <name>phosphocholine</name>
        <dbReference type="ChEBI" id="CHEBI:295975"/>
    </ligand>
</feature>
<feature type="binding site" evidence="3">
    <location>
        <position position="100"/>
    </location>
    <ligand>
        <name>phosphocholine</name>
        <dbReference type="ChEBI" id="CHEBI:295975"/>
    </ligand>
</feature>
<feature type="binding site" evidence="3">
    <location>
        <position position="102"/>
    </location>
    <ligand>
        <name>phosphocholine</name>
        <dbReference type="ChEBI" id="CHEBI:295975"/>
    </ligand>
</feature>
<feature type="binding site" evidence="3">
    <location>
        <position position="128"/>
    </location>
    <ligand>
        <name>phosphocholine</name>
        <dbReference type="ChEBI" id="CHEBI:295975"/>
    </ligand>
</feature>
<feature type="binding site" evidence="3">
    <location>
        <position position="133"/>
    </location>
    <ligand>
        <name>phosphocholine</name>
        <dbReference type="ChEBI" id="CHEBI:295975"/>
    </ligand>
</feature>
<feature type="site" description="Important in the initial contact with the lipid membrane" evidence="1">
    <location>
        <position position="108"/>
    </location>
</feature>
<accession>Q5I2B1</accession>